<keyword id="KW-0687">Ribonucleoprotein</keyword>
<keyword id="KW-0689">Ribosomal protein</keyword>
<name>RL33_HELPJ</name>
<proteinExistence type="inferred from homology"/>
<reference key="1">
    <citation type="journal article" date="1999" name="Nature">
        <title>Genomic sequence comparison of two unrelated isolates of the human gastric pathogen Helicobacter pylori.</title>
        <authorList>
            <person name="Alm R.A."/>
            <person name="Ling L.-S.L."/>
            <person name="Moir D.T."/>
            <person name="King B.L."/>
            <person name="Brown E.D."/>
            <person name="Doig P.C."/>
            <person name="Smith D.R."/>
            <person name="Noonan B."/>
            <person name="Guild B.C."/>
            <person name="deJonge B.L."/>
            <person name="Carmel G."/>
            <person name="Tummino P.J."/>
            <person name="Caruso A."/>
            <person name="Uria-Nickelsen M."/>
            <person name="Mills D.M."/>
            <person name="Ives C."/>
            <person name="Gibson R."/>
            <person name="Merberg D."/>
            <person name="Mills S.D."/>
            <person name="Jiang Q."/>
            <person name="Taylor D.E."/>
            <person name="Vovis G.F."/>
            <person name="Trust T.J."/>
        </authorList>
    </citation>
    <scope>NUCLEOTIDE SEQUENCE [LARGE SCALE GENOMIC DNA]</scope>
    <source>
        <strain>J99 / ATCC 700824</strain>
    </source>
</reference>
<organism>
    <name type="scientific">Helicobacter pylori (strain J99 / ATCC 700824)</name>
    <name type="common">Campylobacter pylori J99</name>
    <dbReference type="NCBI Taxonomy" id="85963"/>
    <lineage>
        <taxon>Bacteria</taxon>
        <taxon>Pseudomonadati</taxon>
        <taxon>Campylobacterota</taxon>
        <taxon>Epsilonproteobacteria</taxon>
        <taxon>Campylobacterales</taxon>
        <taxon>Helicobacteraceae</taxon>
        <taxon>Helicobacter</taxon>
    </lineage>
</organism>
<evidence type="ECO:0000305" key="1"/>
<protein>
    <recommendedName>
        <fullName evidence="1">Large ribosomal subunit protein bL33</fullName>
    </recommendedName>
    <alternativeName>
        <fullName>50S ribosomal protein L33</fullName>
    </alternativeName>
</protein>
<gene>
    <name type="primary">rpmG</name>
    <name type="ordered locus">jhp_1127</name>
</gene>
<sequence length="52" mass="6066">MKVKIGLKCSDCEDINYSTTKNAKTNTEKLELKKFCPRENKHTLHKEIKLKS</sequence>
<accession>P66218</accession>
<accession>P56055</accession>
<dbReference type="EMBL" id="AE001439">
    <property type="protein sequence ID" value="AAD06710.1"/>
    <property type="molecule type" value="Genomic_DNA"/>
</dbReference>
<dbReference type="RefSeq" id="WP_000865159.1">
    <property type="nucleotide sequence ID" value="NZ_CP011330.1"/>
</dbReference>
<dbReference type="SMR" id="P66218"/>
<dbReference type="KEGG" id="hpj:jhp_1127"/>
<dbReference type="PATRIC" id="fig|85963.30.peg.1449"/>
<dbReference type="eggNOG" id="COG0267">
    <property type="taxonomic scope" value="Bacteria"/>
</dbReference>
<dbReference type="Proteomes" id="UP000000804">
    <property type="component" value="Chromosome"/>
</dbReference>
<dbReference type="GO" id="GO:0005737">
    <property type="term" value="C:cytoplasm"/>
    <property type="evidence" value="ECO:0007669"/>
    <property type="project" value="UniProtKB-ARBA"/>
</dbReference>
<dbReference type="GO" id="GO:1990904">
    <property type="term" value="C:ribonucleoprotein complex"/>
    <property type="evidence" value="ECO:0007669"/>
    <property type="project" value="UniProtKB-KW"/>
</dbReference>
<dbReference type="GO" id="GO:0005840">
    <property type="term" value="C:ribosome"/>
    <property type="evidence" value="ECO:0007669"/>
    <property type="project" value="UniProtKB-KW"/>
</dbReference>
<dbReference type="GO" id="GO:0003735">
    <property type="term" value="F:structural constituent of ribosome"/>
    <property type="evidence" value="ECO:0007669"/>
    <property type="project" value="InterPro"/>
</dbReference>
<dbReference type="GO" id="GO:0006412">
    <property type="term" value="P:translation"/>
    <property type="evidence" value="ECO:0007669"/>
    <property type="project" value="UniProtKB-UniRule"/>
</dbReference>
<dbReference type="Gene3D" id="2.20.28.120">
    <property type="entry name" value="Ribosomal protein L33"/>
    <property type="match status" value="1"/>
</dbReference>
<dbReference type="HAMAP" id="MF_00294">
    <property type="entry name" value="Ribosomal_bL33"/>
    <property type="match status" value="1"/>
</dbReference>
<dbReference type="InterPro" id="IPR001705">
    <property type="entry name" value="Ribosomal_bL33"/>
</dbReference>
<dbReference type="InterPro" id="IPR018264">
    <property type="entry name" value="Ribosomal_bL33_CS"/>
</dbReference>
<dbReference type="InterPro" id="IPR038584">
    <property type="entry name" value="Ribosomal_bL33_sf"/>
</dbReference>
<dbReference type="InterPro" id="IPR011332">
    <property type="entry name" value="Ribosomal_zn-bd"/>
</dbReference>
<dbReference type="NCBIfam" id="NF001764">
    <property type="entry name" value="PRK00504.1"/>
    <property type="match status" value="1"/>
</dbReference>
<dbReference type="NCBIfam" id="NF001860">
    <property type="entry name" value="PRK00595.1"/>
    <property type="match status" value="1"/>
</dbReference>
<dbReference type="NCBIfam" id="TIGR01023">
    <property type="entry name" value="rpmG_bact"/>
    <property type="match status" value="1"/>
</dbReference>
<dbReference type="PANTHER" id="PTHR43168">
    <property type="entry name" value="50S RIBOSOMAL PROTEIN L33, CHLOROPLASTIC"/>
    <property type="match status" value="1"/>
</dbReference>
<dbReference type="PANTHER" id="PTHR43168:SF6">
    <property type="entry name" value="LARGE RIBOSOMAL SUBUNIT PROTEIN BL33A"/>
    <property type="match status" value="1"/>
</dbReference>
<dbReference type="Pfam" id="PF00471">
    <property type="entry name" value="Ribosomal_L33"/>
    <property type="match status" value="1"/>
</dbReference>
<dbReference type="SUPFAM" id="SSF57829">
    <property type="entry name" value="Zn-binding ribosomal proteins"/>
    <property type="match status" value="1"/>
</dbReference>
<dbReference type="PROSITE" id="PS00582">
    <property type="entry name" value="RIBOSOMAL_L33"/>
    <property type="match status" value="1"/>
</dbReference>
<comment type="similarity">
    <text evidence="1">Belongs to the bacterial ribosomal protein bL33 family.</text>
</comment>
<feature type="chain" id="PRO_0000170169" description="Large ribosomal subunit protein bL33">
    <location>
        <begin position="1"/>
        <end position="52"/>
    </location>
</feature>